<sequence length="380" mass="42762">MKWLVLLGLVAFSECIFKIPLRRVKTMRKTLSGKNMLNDVLKEHPYRLPQISFRGSNLIIHPLRNIRDTFYVGNITIGTPPQEFQVLFDTGSSVLWVPSVLCNSSTCSIHVRFRHLQSSTFRTTNKTFWITYGAGTMKGVVAHDTVRIGDLVSIDQPFGLSMAEYGFHGRRFDGVLGLNYPRQSCCRPTPIFDKLKNQGAISEPVFAFYLSKDEQEGSVVMFGGVDHRYYKGELNWVPLVKADDWTIQVDRISMRREVIACSDGCDALLDTGASFIHGPGRLIDDIQKLIGSEPRDLKHYISCSAVNTLPSIIFTINGINYPVPAQAYILKGSTGHCYTAFRAKRVRTSTESWVLGDVFLRLYFSVFDRGNDRIGLAPAM</sequence>
<proteinExistence type="evidence at protein level"/>
<name>PAG4_SHEEP</name>
<accession>P83495</accession>
<accession>O02724</accession>
<comment type="subcellular location">
    <subcellularLocation>
        <location evidence="8">Secreted</location>
        <location evidence="8">Extracellular space</location>
    </subcellularLocation>
</comment>
<comment type="tissue specificity">
    <text evidence="5 6 7 8">Trophoblast and placental tissue. Produced specifically in the invasive binucleate cells of the placenta.</text>
</comment>
<comment type="developmental stage">
    <text evidence="5 6 8">Detected in the later stages of pregnancy between day 60 and day 100 of gestation.</text>
</comment>
<comment type="similarity">
    <text evidence="9">Belongs to the peptidase A1 family.</text>
</comment>
<dbReference type="EC" id="3.4.23.-"/>
<dbReference type="EMBL" id="U94790">
    <property type="protein sequence ID" value="AAB53225.1"/>
    <property type="molecule type" value="mRNA"/>
</dbReference>
<dbReference type="RefSeq" id="NP_001009462.1">
    <property type="nucleotide sequence ID" value="NM_001009462.1"/>
</dbReference>
<dbReference type="SMR" id="P83495"/>
<dbReference type="MEROPS" id="A01.089"/>
<dbReference type="GeneID" id="443536"/>
<dbReference type="CTD" id="337898"/>
<dbReference type="Proteomes" id="UP000002356">
    <property type="component" value="Unplaced"/>
</dbReference>
<dbReference type="GO" id="GO:0005576">
    <property type="term" value="C:extracellular region"/>
    <property type="evidence" value="ECO:0007669"/>
    <property type="project" value="UniProtKB-SubCell"/>
</dbReference>
<dbReference type="GO" id="GO:0004190">
    <property type="term" value="F:aspartic-type endopeptidase activity"/>
    <property type="evidence" value="ECO:0007669"/>
    <property type="project" value="UniProtKB-KW"/>
</dbReference>
<dbReference type="GO" id="GO:0006508">
    <property type="term" value="P:proteolysis"/>
    <property type="evidence" value="ECO:0007669"/>
    <property type="project" value="UniProtKB-KW"/>
</dbReference>
<dbReference type="FunFam" id="2.40.70.10:FF:000006">
    <property type="entry name" value="Cathepsin E"/>
    <property type="match status" value="1"/>
</dbReference>
<dbReference type="FunFam" id="2.40.70.10:FF:000004">
    <property type="entry name" value="Pepsin A"/>
    <property type="match status" value="1"/>
</dbReference>
<dbReference type="Gene3D" id="6.10.140.60">
    <property type="match status" value="1"/>
</dbReference>
<dbReference type="Gene3D" id="2.40.70.10">
    <property type="entry name" value="Acid Proteases"/>
    <property type="match status" value="2"/>
</dbReference>
<dbReference type="InterPro" id="IPR001461">
    <property type="entry name" value="Aspartic_peptidase_A1"/>
</dbReference>
<dbReference type="InterPro" id="IPR001969">
    <property type="entry name" value="Aspartic_peptidase_AS"/>
</dbReference>
<dbReference type="InterPro" id="IPR012848">
    <property type="entry name" value="Aspartic_peptidase_N"/>
</dbReference>
<dbReference type="InterPro" id="IPR033121">
    <property type="entry name" value="PEPTIDASE_A1"/>
</dbReference>
<dbReference type="InterPro" id="IPR021109">
    <property type="entry name" value="Peptidase_aspartic_dom_sf"/>
</dbReference>
<dbReference type="PANTHER" id="PTHR47966">
    <property type="entry name" value="BETA-SITE APP-CLEAVING ENZYME, ISOFORM A-RELATED"/>
    <property type="match status" value="1"/>
</dbReference>
<dbReference type="PANTHER" id="PTHR47966:SF49">
    <property type="entry name" value="PEPSIN A-5"/>
    <property type="match status" value="1"/>
</dbReference>
<dbReference type="Pfam" id="PF07966">
    <property type="entry name" value="A1_Propeptide"/>
    <property type="match status" value="1"/>
</dbReference>
<dbReference type="Pfam" id="PF00026">
    <property type="entry name" value="Asp"/>
    <property type="match status" value="1"/>
</dbReference>
<dbReference type="PRINTS" id="PR00792">
    <property type="entry name" value="PEPSIN"/>
</dbReference>
<dbReference type="SUPFAM" id="SSF50630">
    <property type="entry name" value="Acid proteases"/>
    <property type="match status" value="1"/>
</dbReference>
<dbReference type="PROSITE" id="PS00141">
    <property type="entry name" value="ASP_PROTEASE"/>
    <property type="match status" value="2"/>
</dbReference>
<dbReference type="PROSITE" id="PS51767">
    <property type="entry name" value="PEPTIDASE_A1"/>
    <property type="match status" value="1"/>
</dbReference>
<keyword id="KW-0064">Aspartyl protease</keyword>
<keyword id="KW-0903">Direct protein sequencing</keyword>
<keyword id="KW-1015">Disulfide bond</keyword>
<keyword id="KW-0325">Glycoprotein</keyword>
<keyword id="KW-0378">Hydrolase</keyword>
<keyword id="KW-0645">Protease</keyword>
<keyword id="KW-1185">Reference proteome</keyword>
<keyword id="KW-0964">Secreted</keyword>
<keyword id="KW-0732">Signal</keyword>
<organism>
    <name type="scientific">Ovis aries</name>
    <name type="common">Sheep</name>
    <dbReference type="NCBI Taxonomy" id="9940"/>
    <lineage>
        <taxon>Eukaryota</taxon>
        <taxon>Metazoa</taxon>
        <taxon>Chordata</taxon>
        <taxon>Craniata</taxon>
        <taxon>Vertebrata</taxon>
        <taxon>Euteleostomi</taxon>
        <taxon>Mammalia</taxon>
        <taxon>Eutheria</taxon>
        <taxon>Laurasiatheria</taxon>
        <taxon>Artiodactyla</taxon>
        <taxon>Ruminantia</taxon>
        <taxon>Pecora</taxon>
        <taxon>Bovidae</taxon>
        <taxon>Caprinae</taxon>
        <taxon>Ovis</taxon>
    </lineage>
</organism>
<evidence type="ECO:0000250" key="1"/>
<evidence type="ECO:0000255" key="2"/>
<evidence type="ECO:0000255" key="3">
    <source>
        <dbReference type="PROSITE-ProRule" id="PRU01103"/>
    </source>
</evidence>
<evidence type="ECO:0000255" key="4">
    <source>
        <dbReference type="PROSITE-ProRule" id="PRU10094"/>
    </source>
</evidence>
<evidence type="ECO:0000269" key="5">
    <source>
    </source>
</evidence>
<evidence type="ECO:0000269" key="6">
    <source>
    </source>
</evidence>
<evidence type="ECO:0000269" key="7">
    <source>
    </source>
</evidence>
<evidence type="ECO:0000269" key="8">
    <source>
    </source>
</evidence>
<evidence type="ECO:0000305" key="9"/>
<protein>
    <recommendedName>
        <fullName>Pregnancy-associated glycoprotein 4</fullName>
        <shortName>ovPAG4</shortName>
        <ecNumber>3.4.23.-</ecNumber>
    </recommendedName>
    <alternativeName>
        <fullName>Pregnancy-associated glycoprotein 58c</fullName>
        <shortName>ovPAG 58c</shortName>
    </alternativeName>
</protein>
<reference key="1">
    <citation type="journal article" date="1997" name="Biol. Reprod.">
        <title>Multiple pregnancy-associated glycoproteins are secreted by day 100 ovine placental tissue.</title>
        <authorList>
            <person name="Xie S."/>
            <person name="Green J."/>
            <person name="Bao B."/>
            <person name="Beckers J.F."/>
            <person name="Valdez K.E."/>
            <person name="Hakami L."/>
            <person name="Roberts R.M."/>
        </authorList>
    </citation>
    <scope>NUCLEOTIDE SEQUENCE [MRNA]</scope>
    <scope>SUBCELLULAR LOCATION</scope>
    <scope>TISSUE SPECIFICITY</scope>
    <scope>DEVELOPMENTAL STAGE</scope>
    <source>
        <tissue>Placenta</tissue>
    </source>
</reference>
<reference key="2">
    <citation type="journal article" date="1997" name="Proc. Natl. Acad. Sci. U.S.A.">
        <title>The diversity and evolutionary relationships of the pregnancy-associated glycoproteins, an aspartic proteinase subfamily consisting of many trophoblast-expressed genes.</title>
        <authorList>
            <person name="Xie S."/>
            <person name="Green J."/>
            <person name="Bixby J.B."/>
            <person name="Szafranska B."/>
            <person name="DeMartini J.C."/>
            <person name="Hecht S."/>
            <person name="Roberts R.M."/>
        </authorList>
    </citation>
    <scope>NUCLEOTIDE SEQUENCE [MRNA]</scope>
    <scope>TISSUE SPECIFICITY</scope>
    <source>
        <tissue>Placenta</tissue>
    </source>
</reference>
<reference evidence="9" key="3">
    <citation type="journal article" date="2004" name="Reprod. Nutr. Dev.">
        <title>Isolation and characterization of eight pregnancy-associated glycoproteins present at high levels in the ovine placenta between day 60 and day 100 of gestation.</title>
        <authorList>
            <person name="El Amiri B."/>
            <person name="Remy B."/>
            <person name="De Sousa N.M."/>
            <person name="Beckers J.F."/>
        </authorList>
    </citation>
    <scope>PROTEIN SEQUENCE OF 54-76</scope>
    <scope>TISSUE SPECIFICITY</scope>
    <scope>DEVELOPMENTAL STAGE</scope>
    <source>
        <tissue evidence="6">Fetal cotyledon</tissue>
    </source>
</reference>
<reference key="4">
    <citation type="journal article" date="2000" name="Biol. Reprod.">
        <title>Pregnancy-associated bovine and ovine glycoproteins exhibit spatially and temporally distinct expression patterns during pregnancy.</title>
        <authorList>
            <person name="Green J.A."/>
            <person name="Xie S."/>
            <person name="Quan X."/>
            <person name="Bao B."/>
            <person name="Gan X."/>
            <person name="Mathialagan N."/>
            <person name="Beckers J.F."/>
            <person name="Roberts R.M."/>
        </authorList>
    </citation>
    <scope>TISSUE SPECIFICITY</scope>
    <scope>DEVELOPMENTAL STAGE</scope>
</reference>
<feature type="signal peptide" evidence="2">
    <location>
        <begin position="1"/>
        <end position="15"/>
    </location>
</feature>
<feature type="propeptide" id="PRO_0000425540" description="Activation peptide" evidence="6">
    <location>
        <begin position="16"/>
        <end position="53"/>
    </location>
</feature>
<feature type="chain" id="PRO_0000199523" description="Pregnancy-associated glycoprotein 4">
    <location>
        <begin position="54"/>
        <end position="380"/>
    </location>
</feature>
<feature type="domain" description="Peptidase A1" evidence="3">
    <location>
        <begin position="71"/>
        <end position="377"/>
    </location>
</feature>
<feature type="active site" evidence="4">
    <location>
        <position position="89"/>
    </location>
</feature>
<feature type="active site" evidence="4">
    <location>
        <position position="270"/>
    </location>
</feature>
<feature type="glycosylation site" description="N-linked (GlcNAc...) asparagine" evidence="2">
    <location>
        <position position="74"/>
    </location>
</feature>
<feature type="glycosylation site" description="N-linked (GlcNAc...) asparagine" evidence="2">
    <location>
        <position position="125"/>
    </location>
</feature>
<feature type="disulfide bond" evidence="1">
    <location>
        <begin position="102"/>
        <end position="107"/>
    </location>
</feature>
<feature type="disulfide bond" evidence="1">
    <location>
        <begin position="261"/>
        <end position="265"/>
    </location>
</feature>
<feature type="disulfide bond" evidence="1">
    <location>
        <begin position="303"/>
        <end position="337"/>
    </location>
</feature>